<keyword id="KW-0963">Cytoplasm</keyword>
<keyword id="KW-0255">Endonuclease</keyword>
<keyword id="KW-0378">Hydrolase</keyword>
<keyword id="KW-0479">Metal-binding</keyword>
<keyword id="KW-0540">Nuclease</keyword>
<keyword id="KW-1185">Reference proteome</keyword>
<keyword id="KW-0690">Ribosome biogenesis</keyword>
<keyword id="KW-0698">rRNA processing</keyword>
<keyword id="KW-0862">Zinc</keyword>
<evidence type="ECO:0000255" key="1">
    <source>
        <dbReference type="HAMAP-Rule" id="MF_00009"/>
    </source>
</evidence>
<proteinExistence type="inferred from homology"/>
<organism>
    <name type="scientific">Lactobacillus delbrueckii subsp. bulgaricus (strain ATCC 11842 / DSM 20081 / BCRC 10696 / JCM 1002 / NBRC 13953 / NCIMB 11778 / NCTC 12712 / WDCM 00102 / Lb 14)</name>
    <dbReference type="NCBI Taxonomy" id="390333"/>
    <lineage>
        <taxon>Bacteria</taxon>
        <taxon>Bacillati</taxon>
        <taxon>Bacillota</taxon>
        <taxon>Bacilli</taxon>
        <taxon>Lactobacillales</taxon>
        <taxon>Lactobacillaceae</taxon>
        <taxon>Lactobacillus</taxon>
    </lineage>
</organism>
<comment type="function">
    <text evidence="1">Single strand-specific metallo-endoribonuclease involved in late-stage 70S ribosome quality control and in maturation of the 3' terminus of the 16S rRNA.</text>
</comment>
<comment type="cofactor">
    <cofactor evidence="1">
        <name>Zn(2+)</name>
        <dbReference type="ChEBI" id="CHEBI:29105"/>
    </cofactor>
    <text evidence="1">Binds 1 zinc ion.</text>
</comment>
<comment type="subcellular location">
    <subcellularLocation>
        <location evidence="1">Cytoplasm</location>
    </subcellularLocation>
</comment>
<comment type="similarity">
    <text evidence="1">Belongs to the endoribonuclease YbeY family.</text>
</comment>
<gene>
    <name evidence="1" type="primary">ybeY</name>
    <name type="ordered locus">Ldb1253</name>
</gene>
<protein>
    <recommendedName>
        <fullName evidence="1">Endoribonuclease YbeY</fullName>
        <ecNumber evidence="1">3.1.-.-</ecNumber>
    </recommendedName>
</protein>
<dbReference type="EC" id="3.1.-.-" evidence="1"/>
<dbReference type="EMBL" id="CR954253">
    <property type="protein sequence ID" value="CAI98055.1"/>
    <property type="molecule type" value="Genomic_DNA"/>
</dbReference>
<dbReference type="RefSeq" id="WP_003618709.1">
    <property type="nucleotide sequence ID" value="NC_008054.1"/>
</dbReference>
<dbReference type="SMR" id="Q1G9W4"/>
<dbReference type="STRING" id="390333.Ldb1253"/>
<dbReference type="KEGG" id="ldb:Ldb1253"/>
<dbReference type="PATRIC" id="fig|390333.13.peg.1655"/>
<dbReference type="eggNOG" id="COG0319">
    <property type="taxonomic scope" value="Bacteria"/>
</dbReference>
<dbReference type="HOGENOM" id="CLU_106710_3_0_9"/>
<dbReference type="BioCyc" id="LDEL390333:LDB_RS05340-MONOMER"/>
<dbReference type="Proteomes" id="UP000001259">
    <property type="component" value="Chromosome"/>
</dbReference>
<dbReference type="GO" id="GO:0005737">
    <property type="term" value="C:cytoplasm"/>
    <property type="evidence" value="ECO:0007669"/>
    <property type="project" value="UniProtKB-SubCell"/>
</dbReference>
<dbReference type="GO" id="GO:0004222">
    <property type="term" value="F:metalloendopeptidase activity"/>
    <property type="evidence" value="ECO:0007669"/>
    <property type="project" value="InterPro"/>
</dbReference>
<dbReference type="GO" id="GO:0004521">
    <property type="term" value="F:RNA endonuclease activity"/>
    <property type="evidence" value="ECO:0007669"/>
    <property type="project" value="UniProtKB-UniRule"/>
</dbReference>
<dbReference type="GO" id="GO:0008270">
    <property type="term" value="F:zinc ion binding"/>
    <property type="evidence" value="ECO:0007669"/>
    <property type="project" value="UniProtKB-UniRule"/>
</dbReference>
<dbReference type="GO" id="GO:0006364">
    <property type="term" value="P:rRNA processing"/>
    <property type="evidence" value="ECO:0007669"/>
    <property type="project" value="UniProtKB-UniRule"/>
</dbReference>
<dbReference type="Gene3D" id="3.40.390.30">
    <property type="entry name" value="Metalloproteases ('zincins'), catalytic domain"/>
    <property type="match status" value="1"/>
</dbReference>
<dbReference type="HAMAP" id="MF_00009">
    <property type="entry name" value="Endoribonucl_YbeY"/>
    <property type="match status" value="1"/>
</dbReference>
<dbReference type="InterPro" id="IPR023091">
    <property type="entry name" value="MetalPrtase_cat_dom_sf_prd"/>
</dbReference>
<dbReference type="InterPro" id="IPR002036">
    <property type="entry name" value="YbeY"/>
</dbReference>
<dbReference type="NCBIfam" id="TIGR00043">
    <property type="entry name" value="rRNA maturation RNase YbeY"/>
    <property type="match status" value="1"/>
</dbReference>
<dbReference type="PANTHER" id="PTHR46986">
    <property type="entry name" value="ENDORIBONUCLEASE YBEY, CHLOROPLASTIC"/>
    <property type="match status" value="1"/>
</dbReference>
<dbReference type="PANTHER" id="PTHR46986:SF1">
    <property type="entry name" value="ENDORIBONUCLEASE YBEY, CHLOROPLASTIC"/>
    <property type="match status" value="1"/>
</dbReference>
<dbReference type="Pfam" id="PF02130">
    <property type="entry name" value="YbeY"/>
    <property type="match status" value="1"/>
</dbReference>
<dbReference type="SUPFAM" id="SSF55486">
    <property type="entry name" value="Metalloproteases ('zincins'), catalytic domain"/>
    <property type="match status" value="1"/>
</dbReference>
<name>YBEY_LACDA</name>
<sequence length="174" mass="20070">MQGIDVSYSDEVGFLTKGDRDWEDWIMQLLLMAKKEIGKDNAQEMSINFVDEDRSQAINRDYRDKDRPTDVISFAIEDGDDGLDLSMFTQDPDFTEDIGDLFMCPSVIERHSKEYGTGFDREFGYTIVHGYLHLNCYDHIEPDEAKEMFGIQGKVLEEYGLPLYPDQLDEGRGK</sequence>
<reference key="1">
    <citation type="journal article" date="2006" name="Proc. Natl. Acad. Sci. U.S.A.">
        <title>The complete genome sequence of Lactobacillus bulgaricus reveals extensive and ongoing reductive evolution.</title>
        <authorList>
            <person name="van de Guchte M."/>
            <person name="Penaud S."/>
            <person name="Grimaldi C."/>
            <person name="Barbe V."/>
            <person name="Bryson K."/>
            <person name="Nicolas P."/>
            <person name="Robert C."/>
            <person name="Oztas S."/>
            <person name="Mangenot S."/>
            <person name="Couloux A."/>
            <person name="Loux V."/>
            <person name="Dervyn R."/>
            <person name="Bossy R."/>
            <person name="Bolotin A."/>
            <person name="Batto J.-M."/>
            <person name="Walunas T."/>
            <person name="Gibrat J.-F."/>
            <person name="Bessieres P."/>
            <person name="Weissenbach J."/>
            <person name="Ehrlich S.D."/>
            <person name="Maguin E."/>
        </authorList>
    </citation>
    <scope>NUCLEOTIDE SEQUENCE [LARGE SCALE GENOMIC DNA]</scope>
    <source>
        <strain>ATCC 11842 / DSM 20081 / BCRC 10696 / JCM 1002 / NBRC 13953 / NCIMB 11778 / NCTC 12712 / WDCM 00102 / Lb 14</strain>
    </source>
</reference>
<accession>Q1G9W4</accession>
<feature type="chain" id="PRO_0000284225" description="Endoribonuclease YbeY">
    <location>
        <begin position="1"/>
        <end position="174"/>
    </location>
</feature>
<feature type="binding site" evidence="1">
    <location>
        <position position="129"/>
    </location>
    <ligand>
        <name>Zn(2+)</name>
        <dbReference type="ChEBI" id="CHEBI:29105"/>
        <note>catalytic</note>
    </ligand>
</feature>
<feature type="binding site" evidence="1">
    <location>
        <position position="133"/>
    </location>
    <ligand>
        <name>Zn(2+)</name>
        <dbReference type="ChEBI" id="CHEBI:29105"/>
        <note>catalytic</note>
    </ligand>
</feature>
<feature type="binding site" evidence="1">
    <location>
        <position position="139"/>
    </location>
    <ligand>
        <name>Zn(2+)</name>
        <dbReference type="ChEBI" id="CHEBI:29105"/>
        <note>catalytic</note>
    </ligand>
</feature>